<protein>
    <recommendedName>
        <fullName evidence="1">Glycine--tRNA ligase alpha subunit</fullName>
        <ecNumber evidence="1">6.1.1.14</ecNumber>
    </recommendedName>
    <alternativeName>
        <fullName evidence="1">Glycyl-tRNA synthetase alpha subunit</fullName>
        <shortName evidence="1">GlyRS</shortName>
    </alternativeName>
</protein>
<feature type="chain" id="PRO_1000047425" description="Glycine--tRNA ligase alpha subunit">
    <location>
        <begin position="1"/>
        <end position="292"/>
    </location>
</feature>
<sequence length="292" mass="33479">MTFQDLILALQGYWAQQGCVIQQPYDTEKGAGTFNPATFLRVLGPEPWNVAYVEPSRRPTDGRYGENPNRLQHYYQFQVIMKPSPMNILDLYLDSLRAFGIDPAKHDIRFVEDDWESPTLGAWGLGWEVWLDGMEITQFTYFQQAGGIDLKPVSSEITYGCERIAMYLQGVDNVYDLEWVKGVSYGDIHHRTEVEFSTYNFEEADVDMLLTLFTMYEKECVRLVERGLVLPAYDFVMKCSHTFNLLDARGAISVTERASYIGRVRNVARLCAEGYLKLRESLGFPLLKGGRK</sequence>
<evidence type="ECO:0000255" key="1">
    <source>
        <dbReference type="HAMAP-Rule" id="MF_00254"/>
    </source>
</evidence>
<comment type="catalytic activity">
    <reaction evidence="1">
        <text>tRNA(Gly) + glycine + ATP = glycyl-tRNA(Gly) + AMP + diphosphate</text>
        <dbReference type="Rhea" id="RHEA:16013"/>
        <dbReference type="Rhea" id="RHEA-COMP:9664"/>
        <dbReference type="Rhea" id="RHEA-COMP:9683"/>
        <dbReference type="ChEBI" id="CHEBI:30616"/>
        <dbReference type="ChEBI" id="CHEBI:33019"/>
        <dbReference type="ChEBI" id="CHEBI:57305"/>
        <dbReference type="ChEBI" id="CHEBI:78442"/>
        <dbReference type="ChEBI" id="CHEBI:78522"/>
        <dbReference type="ChEBI" id="CHEBI:456215"/>
        <dbReference type="EC" id="6.1.1.14"/>
    </reaction>
</comment>
<comment type="subunit">
    <text evidence="1">Tetramer of two alpha and two beta subunits.</text>
</comment>
<comment type="subcellular location">
    <subcellularLocation>
        <location evidence="1">Cytoplasm</location>
    </subcellularLocation>
</comment>
<comment type="similarity">
    <text evidence="1">Belongs to the class-II aminoacyl-tRNA synthetase family.</text>
</comment>
<name>SYGA_GEOSL</name>
<proteinExistence type="inferred from homology"/>
<keyword id="KW-0030">Aminoacyl-tRNA synthetase</keyword>
<keyword id="KW-0067">ATP-binding</keyword>
<keyword id="KW-0963">Cytoplasm</keyword>
<keyword id="KW-0436">Ligase</keyword>
<keyword id="KW-0547">Nucleotide-binding</keyword>
<keyword id="KW-0648">Protein biosynthesis</keyword>
<keyword id="KW-1185">Reference proteome</keyword>
<organism>
    <name type="scientific">Geobacter sulfurreducens (strain ATCC 51573 / DSM 12127 / PCA)</name>
    <dbReference type="NCBI Taxonomy" id="243231"/>
    <lineage>
        <taxon>Bacteria</taxon>
        <taxon>Pseudomonadati</taxon>
        <taxon>Thermodesulfobacteriota</taxon>
        <taxon>Desulfuromonadia</taxon>
        <taxon>Geobacterales</taxon>
        <taxon>Geobacteraceae</taxon>
        <taxon>Geobacter</taxon>
    </lineage>
</organism>
<accession>Q74FM8</accession>
<gene>
    <name evidence="1" type="primary">glyQ</name>
    <name type="ordered locus">GSU0578</name>
</gene>
<reference key="1">
    <citation type="journal article" date="2003" name="Science">
        <title>Genome of Geobacter sulfurreducens: metal reduction in subsurface environments.</title>
        <authorList>
            <person name="Methe B.A."/>
            <person name="Nelson K.E."/>
            <person name="Eisen J.A."/>
            <person name="Paulsen I.T."/>
            <person name="Nelson W.C."/>
            <person name="Heidelberg J.F."/>
            <person name="Wu D."/>
            <person name="Wu M."/>
            <person name="Ward N.L."/>
            <person name="Beanan M.J."/>
            <person name="Dodson R.J."/>
            <person name="Madupu R."/>
            <person name="Brinkac L.M."/>
            <person name="Daugherty S.C."/>
            <person name="DeBoy R.T."/>
            <person name="Durkin A.S."/>
            <person name="Gwinn M.L."/>
            <person name="Kolonay J.F."/>
            <person name="Sullivan S.A."/>
            <person name="Haft D.H."/>
            <person name="Selengut J."/>
            <person name="Davidsen T.M."/>
            <person name="Zafar N."/>
            <person name="White O."/>
            <person name="Tran B."/>
            <person name="Romero C."/>
            <person name="Forberger H.A."/>
            <person name="Weidman J.F."/>
            <person name="Khouri H.M."/>
            <person name="Feldblyum T.V."/>
            <person name="Utterback T.R."/>
            <person name="Van Aken S.E."/>
            <person name="Lovley D.R."/>
            <person name="Fraser C.M."/>
        </authorList>
    </citation>
    <scope>NUCLEOTIDE SEQUENCE [LARGE SCALE GENOMIC DNA]</scope>
    <source>
        <strain>ATCC 51573 / DSM 12127 / PCA</strain>
    </source>
</reference>
<dbReference type="EC" id="6.1.1.14" evidence="1"/>
<dbReference type="EMBL" id="AE017180">
    <property type="protein sequence ID" value="AAR33909.1"/>
    <property type="molecule type" value="Genomic_DNA"/>
</dbReference>
<dbReference type="RefSeq" id="NP_951636.1">
    <property type="nucleotide sequence ID" value="NC_002939.5"/>
</dbReference>
<dbReference type="RefSeq" id="WP_010941241.1">
    <property type="nucleotide sequence ID" value="NC_002939.5"/>
</dbReference>
<dbReference type="SMR" id="Q74FM8"/>
<dbReference type="FunCoup" id="Q74FM8">
    <property type="interactions" value="408"/>
</dbReference>
<dbReference type="STRING" id="243231.GSU0578"/>
<dbReference type="EnsemblBacteria" id="AAR33909">
    <property type="protein sequence ID" value="AAR33909"/>
    <property type="gene ID" value="GSU0578"/>
</dbReference>
<dbReference type="KEGG" id="gsu:GSU0578"/>
<dbReference type="PATRIC" id="fig|243231.5.peg.576"/>
<dbReference type="eggNOG" id="COG0752">
    <property type="taxonomic scope" value="Bacteria"/>
</dbReference>
<dbReference type="HOGENOM" id="CLU_057066_1_0_7"/>
<dbReference type="InParanoid" id="Q74FM8"/>
<dbReference type="OrthoDB" id="9802183at2"/>
<dbReference type="Proteomes" id="UP000000577">
    <property type="component" value="Chromosome"/>
</dbReference>
<dbReference type="GO" id="GO:0005737">
    <property type="term" value="C:cytoplasm"/>
    <property type="evidence" value="ECO:0007669"/>
    <property type="project" value="UniProtKB-SubCell"/>
</dbReference>
<dbReference type="GO" id="GO:0005524">
    <property type="term" value="F:ATP binding"/>
    <property type="evidence" value="ECO:0007669"/>
    <property type="project" value="UniProtKB-UniRule"/>
</dbReference>
<dbReference type="GO" id="GO:0004820">
    <property type="term" value="F:glycine-tRNA ligase activity"/>
    <property type="evidence" value="ECO:0007669"/>
    <property type="project" value="UniProtKB-UniRule"/>
</dbReference>
<dbReference type="GO" id="GO:0006426">
    <property type="term" value="P:glycyl-tRNA aminoacylation"/>
    <property type="evidence" value="ECO:0007669"/>
    <property type="project" value="UniProtKB-UniRule"/>
</dbReference>
<dbReference type="CDD" id="cd00733">
    <property type="entry name" value="GlyRS_alpha_core"/>
    <property type="match status" value="1"/>
</dbReference>
<dbReference type="FunFam" id="3.30.930.10:FF:000006">
    <property type="entry name" value="Glycine--tRNA ligase alpha subunit"/>
    <property type="match status" value="1"/>
</dbReference>
<dbReference type="Gene3D" id="3.30.930.10">
    <property type="entry name" value="Bira Bifunctional Protein, Domain 2"/>
    <property type="match status" value="1"/>
</dbReference>
<dbReference type="Gene3D" id="1.20.58.180">
    <property type="entry name" value="Class II aaRS and biotin synthetases, domain 2"/>
    <property type="match status" value="1"/>
</dbReference>
<dbReference type="HAMAP" id="MF_00254">
    <property type="entry name" value="Gly_tRNA_synth_alpha"/>
    <property type="match status" value="1"/>
</dbReference>
<dbReference type="InterPro" id="IPR045864">
    <property type="entry name" value="aa-tRNA-synth_II/BPL/LPL"/>
</dbReference>
<dbReference type="InterPro" id="IPR006194">
    <property type="entry name" value="Gly-tRNA-synth_heterodimer"/>
</dbReference>
<dbReference type="InterPro" id="IPR002310">
    <property type="entry name" value="Gly-tRNA_ligase_asu"/>
</dbReference>
<dbReference type="NCBIfam" id="TIGR00388">
    <property type="entry name" value="glyQ"/>
    <property type="match status" value="1"/>
</dbReference>
<dbReference type="NCBIfam" id="NF006827">
    <property type="entry name" value="PRK09348.1"/>
    <property type="match status" value="1"/>
</dbReference>
<dbReference type="PANTHER" id="PTHR30075:SF2">
    <property type="entry name" value="GLYCINE--TRNA LIGASE, CHLOROPLASTIC_MITOCHONDRIAL 2"/>
    <property type="match status" value="1"/>
</dbReference>
<dbReference type="PANTHER" id="PTHR30075">
    <property type="entry name" value="GLYCYL-TRNA SYNTHETASE"/>
    <property type="match status" value="1"/>
</dbReference>
<dbReference type="Pfam" id="PF02091">
    <property type="entry name" value="tRNA-synt_2e"/>
    <property type="match status" value="1"/>
</dbReference>
<dbReference type="PRINTS" id="PR01044">
    <property type="entry name" value="TRNASYNTHGA"/>
</dbReference>
<dbReference type="SUPFAM" id="SSF55681">
    <property type="entry name" value="Class II aaRS and biotin synthetases"/>
    <property type="match status" value="1"/>
</dbReference>
<dbReference type="PROSITE" id="PS50861">
    <property type="entry name" value="AA_TRNA_LIGASE_II_GLYAB"/>
    <property type="match status" value="1"/>
</dbReference>